<evidence type="ECO:0000255" key="1">
    <source>
        <dbReference type="HAMAP-Rule" id="MF_01876"/>
    </source>
</evidence>
<name>PSUG_DEIRA</name>
<sequence>MTSKPSNDRLHSYLDLQPEVAAALSQGRPVVALESTIISHGMPYPQNVEMARGVEQIVRDNGAVPATIAVLGGRLKVGLSADELELLATDKAVQKISTRDLPVTVALGGHGATTVASTMRIAALAGIRVFATGGTGGVHRGAGETMDISADLLELARTDVCVVSAGVKSILDIGLTLEVLETQGVPAITLGADEFPAFYSRRSGFSSPLTVQTPAEAARVLKVKWDLGLTGGVLLANPVPETAEIPAEEMETHITRALADMAALGLSGKDTTPYLLGRIVELTGGRSLETNIALVRHNAAAAAQVAAEYARLG</sequence>
<organism>
    <name type="scientific">Deinococcus radiodurans (strain ATCC 13939 / DSM 20539 / JCM 16871 / CCUG 27074 / LMG 4051 / NBRC 15346 / NCIMB 9279 / VKM B-1422 / R1)</name>
    <dbReference type="NCBI Taxonomy" id="243230"/>
    <lineage>
        <taxon>Bacteria</taxon>
        <taxon>Thermotogati</taxon>
        <taxon>Deinococcota</taxon>
        <taxon>Deinococci</taxon>
        <taxon>Deinococcales</taxon>
        <taxon>Deinococcaceae</taxon>
        <taxon>Deinococcus</taxon>
    </lineage>
</organism>
<protein>
    <recommendedName>
        <fullName evidence="1">Pseudouridine-5'-phosphate glycosidase</fullName>
        <shortName evidence="1">PsiMP glycosidase</shortName>
        <ecNumber evidence="1">4.2.1.70</ecNumber>
    </recommendedName>
</protein>
<comment type="function">
    <text evidence="1">Catalyzes the reversible cleavage of pseudouridine 5'-phosphate (PsiMP) to ribose 5-phosphate and uracil. Functions biologically in the cleavage direction, as part of a pseudouridine degradation pathway.</text>
</comment>
<comment type="catalytic activity">
    <reaction evidence="1">
        <text>D-ribose 5-phosphate + uracil = psi-UMP + H2O</text>
        <dbReference type="Rhea" id="RHEA:18337"/>
        <dbReference type="ChEBI" id="CHEBI:15377"/>
        <dbReference type="ChEBI" id="CHEBI:17568"/>
        <dbReference type="ChEBI" id="CHEBI:58380"/>
        <dbReference type="ChEBI" id="CHEBI:78346"/>
        <dbReference type="EC" id="4.2.1.70"/>
    </reaction>
</comment>
<comment type="cofactor">
    <cofactor evidence="1">
        <name>Mn(2+)</name>
        <dbReference type="ChEBI" id="CHEBI:29035"/>
    </cofactor>
    <text evidence="1">Binds 1 Mn(2+) ion per subunit.</text>
</comment>
<comment type="subunit">
    <text evidence="1">Homotrimer.</text>
</comment>
<comment type="similarity">
    <text evidence="1">Belongs to the pseudouridine-5'-phosphate glycosidase family.</text>
</comment>
<proteinExistence type="inferred from homology"/>
<accession>Q9RS16</accession>
<feature type="chain" id="PRO_0000390515" description="Pseudouridine-5'-phosphate glycosidase">
    <location>
        <begin position="1"/>
        <end position="313"/>
    </location>
</feature>
<feature type="active site" description="Proton donor" evidence="1">
    <location>
        <position position="34"/>
    </location>
</feature>
<feature type="active site" description="Nucleophile" evidence="1">
    <location>
        <position position="168"/>
    </location>
</feature>
<feature type="binding site" evidence="1">
    <location>
        <position position="95"/>
    </location>
    <ligand>
        <name>substrate</name>
    </ligand>
</feature>
<feature type="binding site" evidence="1">
    <location>
        <position position="115"/>
    </location>
    <ligand>
        <name>substrate</name>
    </ligand>
</feature>
<feature type="binding site" evidence="1">
    <location>
        <position position="147"/>
    </location>
    <ligand>
        <name>Mn(2+)</name>
        <dbReference type="ChEBI" id="CHEBI:29035"/>
    </ligand>
</feature>
<feature type="binding site" evidence="1">
    <location>
        <begin position="149"/>
        <end position="151"/>
    </location>
    <ligand>
        <name>substrate</name>
    </ligand>
</feature>
<gene>
    <name evidence="1" type="primary">psuG</name>
    <name type="ordered locus">DR_2311</name>
</gene>
<reference key="1">
    <citation type="journal article" date="1999" name="Science">
        <title>Genome sequence of the radioresistant bacterium Deinococcus radiodurans R1.</title>
        <authorList>
            <person name="White O."/>
            <person name="Eisen J.A."/>
            <person name="Heidelberg J.F."/>
            <person name="Hickey E.K."/>
            <person name="Peterson J.D."/>
            <person name="Dodson R.J."/>
            <person name="Haft D.H."/>
            <person name="Gwinn M.L."/>
            <person name="Nelson W.C."/>
            <person name="Richardson D.L."/>
            <person name="Moffat K.S."/>
            <person name="Qin H."/>
            <person name="Jiang L."/>
            <person name="Pamphile W."/>
            <person name="Crosby M."/>
            <person name="Shen M."/>
            <person name="Vamathevan J.J."/>
            <person name="Lam P."/>
            <person name="McDonald L.A."/>
            <person name="Utterback T.R."/>
            <person name="Zalewski C."/>
            <person name="Makarova K.S."/>
            <person name="Aravind L."/>
            <person name="Daly M.J."/>
            <person name="Minton K.W."/>
            <person name="Fleischmann R.D."/>
            <person name="Ketchum K.A."/>
            <person name="Nelson K.E."/>
            <person name="Salzberg S.L."/>
            <person name="Smith H.O."/>
            <person name="Venter J.C."/>
            <person name="Fraser C.M."/>
        </authorList>
    </citation>
    <scope>NUCLEOTIDE SEQUENCE [LARGE SCALE GENOMIC DNA]</scope>
    <source>
        <strain>ATCC 13939 / DSM 20539 / JCM 16871 / CCUG 27074 / LMG 4051 / NBRC 15346 / NCIMB 9279 / VKM B-1422 / R1</strain>
    </source>
</reference>
<dbReference type="EC" id="4.2.1.70" evidence="1"/>
<dbReference type="EMBL" id="AE000513">
    <property type="protein sequence ID" value="AAF11858.1"/>
    <property type="molecule type" value="Genomic_DNA"/>
</dbReference>
<dbReference type="PIR" id="C75288">
    <property type="entry name" value="C75288"/>
</dbReference>
<dbReference type="RefSeq" id="NP_296032.1">
    <property type="nucleotide sequence ID" value="NC_001263.1"/>
</dbReference>
<dbReference type="RefSeq" id="WP_010888939.1">
    <property type="nucleotide sequence ID" value="NC_001263.1"/>
</dbReference>
<dbReference type="SMR" id="Q9RS16"/>
<dbReference type="STRING" id="243230.DR_2311"/>
<dbReference type="PaxDb" id="243230-DR_2311"/>
<dbReference type="EnsemblBacteria" id="AAF11858">
    <property type="protein sequence ID" value="AAF11858"/>
    <property type="gene ID" value="DR_2311"/>
</dbReference>
<dbReference type="GeneID" id="69518563"/>
<dbReference type="KEGG" id="dra:DR_2311"/>
<dbReference type="PATRIC" id="fig|243230.17.peg.2540"/>
<dbReference type="eggNOG" id="COG2313">
    <property type="taxonomic scope" value="Bacteria"/>
</dbReference>
<dbReference type="HOGENOM" id="CLU_012201_0_1_0"/>
<dbReference type="InParanoid" id="Q9RS16"/>
<dbReference type="OrthoDB" id="9805870at2"/>
<dbReference type="Proteomes" id="UP000002524">
    <property type="component" value="Chromosome 1"/>
</dbReference>
<dbReference type="GO" id="GO:0005737">
    <property type="term" value="C:cytoplasm"/>
    <property type="evidence" value="ECO:0000318"/>
    <property type="project" value="GO_Central"/>
</dbReference>
<dbReference type="GO" id="GO:0016798">
    <property type="term" value="F:hydrolase activity, acting on glycosyl bonds"/>
    <property type="evidence" value="ECO:0007669"/>
    <property type="project" value="UniProtKB-KW"/>
</dbReference>
<dbReference type="GO" id="GO:0046872">
    <property type="term" value="F:metal ion binding"/>
    <property type="evidence" value="ECO:0007669"/>
    <property type="project" value="UniProtKB-KW"/>
</dbReference>
<dbReference type="GO" id="GO:0004730">
    <property type="term" value="F:pseudouridylate synthase activity"/>
    <property type="evidence" value="ECO:0000318"/>
    <property type="project" value="GO_Central"/>
</dbReference>
<dbReference type="GO" id="GO:0046113">
    <property type="term" value="P:nucleobase catabolic process"/>
    <property type="evidence" value="ECO:0007669"/>
    <property type="project" value="UniProtKB-UniRule"/>
</dbReference>
<dbReference type="Gene3D" id="3.40.1790.10">
    <property type="entry name" value="Indigoidine synthase domain"/>
    <property type="match status" value="1"/>
</dbReference>
<dbReference type="HAMAP" id="MF_01876">
    <property type="entry name" value="PsiMP_glycosidase"/>
    <property type="match status" value="1"/>
</dbReference>
<dbReference type="InterPro" id="IPR022830">
    <property type="entry name" value="Indigdn_synthA-like"/>
</dbReference>
<dbReference type="InterPro" id="IPR007342">
    <property type="entry name" value="PsuG"/>
</dbReference>
<dbReference type="PANTHER" id="PTHR42909:SF1">
    <property type="entry name" value="CARBOHYDRATE KINASE PFKB DOMAIN-CONTAINING PROTEIN"/>
    <property type="match status" value="1"/>
</dbReference>
<dbReference type="PANTHER" id="PTHR42909">
    <property type="entry name" value="ZGC:136858"/>
    <property type="match status" value="1"/>
</dbReference>
<dbReference type="Pfam" id="PF04227">
    <property type="entry name" value="Indigoidine_A"/>
    <property type="match status" value="1"/>
</dbReference>
<dbReference type="SUPFAM" id="SSF110581">
    <property type="entry name" value="Indigoidine synthase A-like"/>
    <property type="match status" value="1"/>
</dbReference>
<keyword id="KW-0326">Glycosidase</keyword>
<keyword id="KW-0378">Hydrolase</keyword>
<keyword id="KW-0456">Lyase</keyword>
<keyword id="KW-0464">Manganese</keyword>
<keyword id="KW-0479">Metal-binding</keyword>
<keyword id="KW-1185">Reference proteome</keyword>